<proteinExistence type="inferred from homology"/>
<gene>
    <name evidence="1" type="primary">kdsB</name>
    <name type="ordered locus">Sbal195_2478</name>
</gene>
<protein>
    <recommendedName>
        <fullName evidence="1">8-amino-3,8-dideoxy-manno-octulosonate cytidylyltransferase</fullName>
        <ecNumber evidence="1">2.7.7.90</ecNumber>
    </recommendedName>
    <alternativeName>
        <fullName evidence="1">CMP-8-amino-3,8-dideoxy-manno-octulosonate synthase</fullName>
    </alternativeName>
</protein>
<comment type="function">
    <text evidence="1">Activates KDO8N (a required 8-carbon sugar) for incorporation into bacterial lipopolysaccharide in the Shewanella genus.</text>
</comment>
<comment type="catalytic activity">
    <reaction evidence="1">
        <text>8-amino-3,8-dideoxy-alpha-D-manno-octulosonate + CTP = CMP-8-amino-3,8-dideoxy-alpha-D-manno-oct-2-ulosonate + diphosphate</text>
        <dbReference type="Rhea" id="RHEA:49284"/>
        <dbReference type="ChEBI" id="CHEBI:33019"/>
        <dbReference type="ChEBI" id="CHEBI:37563"/>
        <dbReference type="ChEBI" id="CHEBI:87091"/>
        <dbReference type="ChEBI" id="CHEBI:91089"/>
        <dbReference type="EC" id="2.7.7.90"/>
    </reaction>
</comment>
<comment type="pathway">
    <text evidence="1">Bacterial outer membrane biogenesis; lipopolysaccharide biosynthesis.</text>
</comment>
<comment type="subcellular location">
    <subcellularLocation>
        <location evidence="1">Cytoplasm</location>
    </subcellularLocation>
</comment>
<comment type="similarity">
    <text evidence="1">Belongs to the KdsB family.</text>
</comment>
<accession>A9L3N6</accession>
<reference key="1">
    <citation type="submission" date="2007-11" db="EMBL/GenBank/DDBJ databases">
        <title>Complete sequence of chromosome of Shewanella baltica OS195.</title>
        <authorList>
            <consortium name="US DOE Joint Genome Institute"/>
            <person name="Copeland A."/>
            <person name="Lucas S."/>
            <person name="Lapidus A."/>
            <person name="Barry K."/>
            <person name="Glavina del Rio T."/>
            <person name="Dalin E."/>
            <person name="Tice H."/>
            <person name="Pitluck S."/>
            <person name="Chain P."/>
            <person name="Malfatti S."/>
            <person name="Shin M."/>
            <person name="Vergez L."/>
            <person name="Schmutz J."/>
            <person name="Larimer F."/>
            <person name="Land M."/>
            <person name="Hauser L."/>
            <person name="Kyrpides N."/>
            <person name="Kim E."/>
            <person name="Brettar I."/>
            <person name="Rodrigues J."/>
            <person name="Konstantinidis K."/>
            <person name="Klappenbach J."/>
            <person name="Hofle M."/>
            <person name="Tiedje J."/>
            <person name="Richardson P."/>
        </authorList>
    </citation>
    <scope>NUCLEOTIDE SEQUENCE [LARGE SCALE GENOMIC DNA]</scope>
    <source>
        <strain>OS195</strain>
    </source>
</reference>
<name>KDSB_SHEB9</name>
<evidence type="ECO:0000255" key="1">
    <source>
        <dbReference type="HAMAP-Rule" id="MF_00057"/>
    </source>
</evidence>
<sequence length="245" mass="27433">MNVTLLIPARYGSSRFPGKPLAPINGKPMIQHVYERASLAKGLTNIYVATDDDRIKAAVEGFGGKVVMTSPDAASGTDRINDAINQLGLKDDDLVINLQGDQPLIDPTSIEQVISLFERHPGEFEMATLGFEIVNKAELDDPMHVKMVFDNNNYALYFSRSRIPFGRDTQDYPVYKHLGVYAYTRKFVQAFAALPLGRLEDLEKLEQLRALEYGHKIKIAISAFDSIEVDTPEDIRKCEQRLAVD</sequence>
<organism>
    <name type="scientific">Shewanella baltica (strain OS195)</name>
    <dbReference type="NCBI Taxonomy" id="399599"/>
    <lineage>
        <taxon>Bacteria</taxon>
        <taxon>Pseudomonadati</taxon>
        <taxon>Pseudomonadota</taxon>
        <taxon>Gammaproteobacteria</taxon>
        <taxon>Alteromonadales</taxon>
        <taxon>Shewanellaceae</taxon>
        <taxon>Shewanella</taxon>
    </lineage>
</organism>
<feature type="chain" id="PRO_0000370147" description="8-amino-3,8-dideoxy-manno-octulosonate cytidylyltransferase">
    <location>
        <begin position="1"/>
        <end position="245"/>
    </location>
</feature>
<dbReference type="EC" id="2.7.7.90" evidence="1"/>
<dbReference type="EMBL" id="CP000891">
    <property type="protein sequence ID" value="ABX49646.1"/>
    <property type="molecule type" value="Genomic_DNA"/>
</dbReference>
<dbReference type="RefSeq" id="WP_012197229.1">
    <property type="nucleotide sequence ID" value="NC_009997.1"/>
</dbReference>
<dbReference type="SMR" id="A9L3N6"/>
<dbReference type="GeneID" id="11772588"/>
<dbReference type="KEGG" id="sbn:Sbal195_2478"/>
<dbReference type="HOGENOM" id="CLU_065038_0_1_6"/>
<dbReference type="UniPathway" id="UPA00030"/>
<dbReference type="Proteomes" id="UP000000770">
    <property type="component" value="Chromosome"/>
</dbReference>
<dbReference type="GO" id="GO:0005829">
    <property type="term" value="C:cytosol"/>
    <property type="evidence" value="ECO:0007669"/>
    <property type="project" value="TreeGrafter"/>
</dbReference>
<dbReference type="GO" id="GO:0008690">
    <property type="term" value="F:3-deoxy-manno-octulosonate cytidylyltransferase activity"/>
    <property type="evidence" value="ECO:0007669"/>
    <property type="project" value="InterPro"/>
</dbReference>
<dbReference type="GO" id="GO:0009103">
    <property type="term" value="P:lipopolysaccharide biosynthetic process"/>
    <property type="evidence" value="ECO:0007669"/>
    <property type="project" value="UniProtKB-UniRule"/>
</dbReference>
<dbReference type="CDD" id="cd02517">
    <property type="entry name" value="CMP-KDO-Synthetase"/>
    <property type="match status" value="1"/>
</dbReference>
<dbReference type="FunFam" id="3.90.550.10:FF:000168">
    <property type="entry name" value="8-amino-3,8-dideoxy-manno-octulosonate cytidylyltransferase"/>
    <property type="match status" value="1"/>
</dbReference>
<dbReference type="Gene3D" id="3.90.550.10">
    <property type="entry name" value="Spore Coat Polysaccharide Biosynthesis Protein SpsA, Chain A"/>
    <property type="match status" value="1"/>
</dbReference>
<dbReference type="HAMAP" id="MF_00057">
    <property type="entry name" value="KdsB"/>
    <property type="match status" value="1"/>
</dbReference>
<dbReference type="InterPro" id="IPR003329">
    <property type="entry name" value="Cytidylyl_trans"/>
</dbReference>
<dbReference type="InterPro" id="IPR004528">
    <property type="entry name" value="KdsB"/>
</dbReference>
<dbReference type="InterPro" id="IPR029044">
    <property type="entry name" value="Nucleotide-diphossugar_trans"/>
</dbReference>
<dbReference type="NCBIfam" id="TIGR00466">
    <property type="entry name" value="kdsB"/>
    <property type="match status" value="1"/>
</dbReference>
<dbReference type="NCBIfam" id="NF003950">
    <property type="entry name" value="PRK05450.1-3"/>
    <property type="match status" value="1"/>
</dbReference>
<dbReference type="NCBIfam" id="NF003952">
    <property type="entry name" value="PRK05450.1-5"/>
    <property type="match status" value="1"/>
</dbReference>
<dbReference type="NCBIfam" id="NF009905">
    <property type="entry name" value="PRK13368.1"/>
    <property type="match status" value="1"/>
</dbReference>
<dbReference type="PANTHER" id="PTHR42866">
    <property type="entry name" value="3-DEOXY-MANNO-OCTULOSONATE CYTIDYLYLTRANSFERASE"/>
    <property type="match status" value="1"/>
</dbReference>
<dbReference type="PANTHER" id="PTHR42866:SF2">
    <property type="entry name" value="3-DEOXY-MANNO-OCTULOSONATE CYTIDYLYLTRANSFERASE, MITOCHONDRIAL"/>
    <property type="match status" value="1"/>
</dbReference>
<dbReference type="Pfam" id="PF02348">
    <property type="entry name" value="CTP_transf_3"/>
    <property type="match status" value="1"/>
</dbReference>
<dbReference type="SUPFAM" id="SSF53448">
    <property type="entry name" value="Nucleotide-diphospho-sugar transferases"/>
    <property type="match status" value="1"/>
</dbReference>
<keyword id="KW-0963">Cytoplasm</keyword>
<keyword id="KW-0448">Lipopolysaccharide biosynthesis</keyword>
<keyword id="KW-0548">Nucleotidyltransferase</keyword>
<keyword id="KW-0808">Transferase</keyword>